<organism>
    <name type="scientific">Cyriopagopus hainanus</name>
    <name type="common">Chinese bird spider</name>
    <name type="synonym">Haplopelma hainanum</name>
    <dbReference type="NCBI Taxonomy" id="209901"/>
    <lineage>
        <taxon>Eukaryota</taxon>
        <taxon>Metazoa</taxon>
        <taxon>Ecdysozoa</taxon>
        <taxon>Arthropoda</taxon>
        <taxon>Chelicerata</taxon>
        <taxon>Arachnida</taxon>
        <taxon>Araneae</taxon>
        <taxon>Mygalomorphae</taxon>
        <taxon>Theraphosidae</taxon>
        <taxon>Haplopelma</taxon>
    </lineage>
</organism>
<proteinExistence type="evidence at transcript level"/>
<keyword id="KW-1015">Disulfide bond</keyword>
<keyword id="KW-0872">Ion channel impairing toxin</keyword>
<keyword id="KW-0960">Knottin</keyword>
<keyword id="KW-0964">Secreted</keyword>
<keyword id="KW-0732">Signal</keyword>
<keyword id="KW-0800">Toxin</keyword>
<evidence type="ECO:0000250" key="1"/>
<evidence type="ECO:0000255" key="2"/>
<evidence type="ECO:0000256" key="3">
    <source>
        <dbReference type="SAM" id="MobiDB-lite"/>
    </source>
</evidence>
<evidence type="ECO:0000305" key="4"/>
<reference key="1">
    <citation type="journal article" date="2010" name="J. Proteome Res.">
        <title>Molecular diversification of peptide toxins from the tarantula Haplopelma hainanum (Ornithoctonus hainana) venom based on transcriptomic, peptidomic, and genomic analyses.</title>
        <authorList>
            <person name="Tang X."/>
            <person name="Zhang Y."/>
            <person name="Hu W."/>
            <person name="Xu D."/>
            <person name="Tao H."/>
            <person name="Yang X."/>
            <person name="Li Y."/>
            <person name="Jiang L."/>
            <person name="Liang S."/>
        </authorList>
    </citation>
    <scope>NUCLEOTIDE SEQUENCE [LARGE SCALE MRNA]</scope>
    <source>
        <tissue>Venom gland</tissue>
    </source>
</reference>
<sequence>MKLCAVIIASLLVCVAVASSSDNQKEFAQEKEMTREETQSLGEHEKDDEVTGSEERSCIEEWKTCENDCECCGMSTLCAASWVDGHQIKLCRNEGGKLKKVLHFIQKSVSKIKSCRK</sequence>
<protein>
    <recommendedName>
        <fullName>Hainantoxin-XV-5</fullName>
        <shortName>HNTX-XV-5</shortName>
    </recommendedName>
</protein>
<accession>D2Y2D9</accession>
<feature type="signal peptide" evidence="2">
    <location>
        <begin position="1"/>
        <end position="20"/>
    </location>
</feature>
<feature type="propeptide" id="PRO_0000401025" evidence="1">
    <location>
        <begin position="21"/>
        <end position="56"/>
    </location>
</feature>
<feature type="peptide" id="PRO_0000401026" description="Hainantoxin-XV-5">
    <location>
        <begin position="57"/>
        <end position="117"/>
    </location>
</feature>
<feature type="region of interest" description="Disordered" evidence="3">
    <location>
        <begin position="20"/>
        <end position="55"/>
    </location>
</feature>
<feature type="compositionally biased region" description="Basic and acidic residues" evidence="3">
    <location>
        <begin position="23"/>
        <end position="55"/>
    </location>
</feature>
<feature type="disulfide bond" evidence="4">
    <location>
        <begin position="58"/>
        <end position="72"/>
    </location>
</feature>
<feature type="disulfide bond" evidence="4">
    <location>
        <begin position="65"/>
        <end position="78"/>
    </location>
</feature>
<feature type="disulfide bond" evidence="4">
    <location>
        <begin position="69"/>
        <end position="115"/>
    </location>
</feature>
<feature type="disulfide bond" evidence="4">
    <location>
        <begin position="71"/>
        <end position="91"/>
    </location>
</feature>
<name>TX32E_CYRHA</name>
<comment type="function">
    <text>Putative ion channel inhibitor.</text>
</comment>
<comment type="subcellular location">
    <subcellularLocation>
        <location evidence="1">Secreted</location>
    </subcellularLocation>
</comment>
<comment type="tissue specificity">
    <text>Expressed by the venom gland.</text>
</comment>
<comment type="domain">
    <text evidence="4">The presence of a 'disulfide through disulfide knot' structurally defines this protein as a knottin.</text>
</comment>
<comment type="similarity">
    <text>Belongs to the neurotoxin 03 (Tx2) family. 02 subfamily. HNTX-XV sub-subfamily.</text>
</comment>
<dbReference type="EMBL" id="GU293016">
    <property type="protein sequence ID" value="ADB56832.1"/>
    <property type="molecule type" value="mRNA"/>
</dbReference>
<dbReference type="SMR" id="D2Y2D9"/>
<dbReference type="ArachnoServer" id="AS001943">
    <property type="toxin name" value="U10-theraphotoxin-Hhn1e"/>
</dbReference>
<dbReference type="GO" id="GO:0005576">
    <property type="term" value="C:extracellular region"/>
    <property type="evidence" value="ECO:0007669"/>
    <property type="project" value="UniProtKB-SubCell"/>
</dbReference>
<dbReference type="GO" id="GO:0099106">
    <property type="term" value="F:ion channel regulator activity"/>
    <property type="evidence" value="ECO:0007669"/>
    <property type="project" value="UniProtKB-KW"/>
</dbReference>
<dbReference type="GO" id="GO:0090729">
    <property type="term" value="F:toxin activity"/>
    <property type="evidence" value="ECO:0007669"/>
    <property type="project" value="UniProtKB-KW"/>
</dbReference>